<protein>
    <recommendedName>
        <fullName evidence="1">Large ribosomal subunit protein bL20</fullName>
    </recommendedName>
    <alternativeName>
        <fullName evidence="2">50S ribosomal protein L20</fullName>
    </alternativeName>
</protein>
<comment type="function">
    <text evidence="1">Binds directly to 23S ribosomal RNA and is necessary for the in vitro assembly process of the 50S ribosomal subunit. It is not involved in the protein synthesizing functions of that subunit.</text>
</comment>
<comment type="similarity">
    <text evidence="1">Belongs to the bacterial ribosomal protein bL20 family.</text>
</comment>
<accession>Q1WUM9</accession>
<name>RL20_LIGS1</name>
<keyword id="KW-1185">Reference proteome</keyword>
<keyword id="KW-0687">Ribonucleoprotein</keyword>
<keyword id="KW-0689">Ribosomal protein</keyword>
<keyword id="KW-0694">RNA-binding</keyword>
<keyword id="KW-0699">rRNA-binding</keyword>
<evidence type="ECO:0000255" key="1">
    <source>
        <dbReference type="HAMAP-Rule" id="MF_00382"/>
    </source>
</evidence>
<evidence type="ECO:0000305" key="2"/>
<sequence length="120" mass="13677">MPRVKGGSVTRQRRKKIIKLAKGYRGAKHIQFKVAKQQVMKSYQYAFRDRRKTKSNFRKLWIARINAAARQNDISYSKLMHGLKLANVEVNRKMLADLAITDAAAFTALVDEAKKALAAE</sequence>
<feature type="chain" id="PRO_1000049000" description="Large ribosomal subunit protein bL20">
    <location>
        <begin position="1"/>
        <end position="120"/>
    </location>
</feature>
<reference key="1">
    <citation type="journal article" date="2006" name="Proc. Natl. Acad. Sci. U.S.A.">
        <title>Multireplicon genome architecture of Lactobacillus salivarius.</title>
        <authorList>
            <person name="Claesson M.J."/>
            <person name="Li Y."/>
            <person name="Leahy S."/>
            <person name="Canchaya C."/>
            <person name="van Pijkeren J.P."/>
            <person name="Cerdeno-Tarraga A.M."/>
            <person name="Parkhill J."/>
            <person name="Flynn S."/>
            <person name="O'Sullivan G.C."/>
            <person name="Collins J.K."/>
            <person name="Higgins D."/>
            <person name="Shanahan F."/>
            <person name="Fitzgerald G.F."/>
            <person name="van Sinderen D."/>
            <person name="O'Toole P.W."/>
        </authorList>
    </citation>
    <scope>NUCLEOTIDE SEQUENCE [LARGE SCALE GENOMIC DNA]</scope>
    <source>
        <strain>UCC118</strain>
    </source>
</reference>
<organism>
    <name type="scientific">Ligilactobacillus salivarius (strain UCC118)</name>
    <name type="common">Lactobacillus salivarius</name>
    <dbReference type="NCBI Taxonomy" id="362948"/>
    <lineage>
        <taxon>Bacteria</taxon>
        <taxon>Bacillati</taxon>
        <taxon>Bacillota</taxon>
        <taxon>Bacilli</taxon>
        <taxon>Lactobacillales</taxon>
        <taxon>Lactobacillaceae</taxon>
        <taxon>Ligilactobacillus</taxon>
    </lineage>
</organism>
<gene>
    <name evidence="1" type="primary">rplT</name>
    <name type="ordered locus">LSL_0497</name>
</gene>
<dbReference type="EMBL" id="CP000233">
    <property type="protein sequence ID" value="ABD99306.1"/>
    <property type="molecule type" value="Genomic_DNA"/>
</dbReference>
<dbReference type="RefSeq" id="WP_003699795.1">
    <property type="nucleotide sequence ID" value="NC_007929.1"/>
</dbReference>
<dbReference type="RefSeq" id="YP_535389.1">
    <property type="nucleotide sequence ID" value="NC_007929.1"/>
</dbReference>
<dbReference type="SMR" id="Q1WUM9"/>
<dbReference type="STRING" id="362948.LSL_0497"/>
<dbReference type="DNASU" id="3977949"/>
<dbReference type="GeneID" id="89465283"/>
<dbReference type="KEGG" id="lsl:LSL_0497"/>
<dbReference type="PATRIC" id="fig|362948.14.peg.573"/>
<dbReference type="HOGENOM" id="CLU_123265_0_1_9"/>
<dbReference type="OrthoDB" id="9808966at2"/>
<dbReference type="Proteomes" id="UP000006559">
    <property type="component" value="Chromosome"/>
</dbReference>
<dbReference type="GO" id="GO:1990904">
    <property type="term" value="C:ribonucleoprotein complex"/>
    <property type="evidence" value="ECO:0007669"/>
    <property type="project" value="UniProtKB-KW"/>
</dbReference>
<dbReference type="GO" id="GO:0005840">
    <property type="term" value="C:ribosome"/>
    <property type="evidence" value="ECO:0007669"/>
    <property type="project" value="UniProtKB-KW"/>
</dbReference>
<dbReference type="GO" id="GO:0019843">
    <property type="term" value="F:rRNA binding"/>
    <property type="evidence" value="ECO:0007669"/>
    <property type="project" value="UniProtKB-UniRule"/>
</dbReference>
<dbReference type="GO" id="GO:0003735">
    <property type="term" value="F:structural constituent of ribosome"/>
    <property type="evidence" value="ECO:0007669"/>
    <property type="project" value="InterPro"/>
</dbReference>
<dbReference type="GO" id="GO:0000027">
    <property type="term" value="P:ribosomal large subunit assembly"/>
    <property type="evidence" value="ECO:0007669"/>
    <property type="project" value="UniProtKB-UniRule"/>
</dbReference>
<dbReference type="GO" id="GO:0006412">
    <property type="term" value="P:translation"/>
    <property type="evidence" value="ECO:0007669"/>
    <property type="project" value="InterPro"/>
</dbReference>
<dbReference type="CDD" id="cd07026">
    <property type="entry name" value="Ribosomal_L20"/>
    <property type="match status" value="1"/>
</dbReference>
<dbReference type="FunFam" id="1.10.1900.20:FF:000001">
    <property type="entry name" value="50S ribosomal protein L20"/>
    <property type="match status" value="1"/>
</dbReference>
<dbReference type="Gene3D" id="6.10.160.10">
    <property type="match status" value="1"/>
</dbReference>
<dbReference type="Gene3D" id="1.10.1900.20">
    <property type="entry name" value="Ribosomal protein L20"/>
    <property type="match status" value="1"/>
</dbReference>
<dbReference type="HAMAP" id="MF_00382">
    <property type="entry name" value="Ribosomal_bL20"/>
    <property type="match status" value="1"/>
</dbReference>
<dbReference type="InterPro" id="IPR005813">
    <property type="entry name" value="Ribosomal_bL20"/>
</dbReference>
<dbReference type="InterPro" id="IPR049946">
    <property type="entry name" value="RIBOSOMAL_L20_CS"/>
</dbReference>
<dbReference type="InterPro" id="IPR035566">
    <property type="entry name" value="Ribosomal_protein_bL20_C"/>
</dbReference>
<dbReference type="NCBIfam" id="TIGR01032">
    <property type="entry name" value="rplT_bact"/>
    <property type="match status" value="1"/>
</dbReference>
<dbReference type="PANTHER" id="PTHR10986">
    <property type="entry name" value="39S RIBOSOMAL PROTEIN L20"/>
    <property type="match status" value="1"/>
</dbReference>
<dbReference type="Pfam" id="PF00453">
    <property type="entry name" value="Ribosomal_L20"/>
    <property type="match status" value="1"/>
</dbReference>
<dbReference type="PRINTS" id="PR00062">
    <property type="entry name" value="RIBOSOMALL20"/>
</dbReference>
<dbReference type="SUPFAM" id="SSF74731">
    <property type="entry name" value="Ribosomal protein L20"/>
    <property type="match status" value="1"/>
</dbReference>
<dbReference type="PROSITE" id="PS00937">
    <property type="entry name" value="RIBOSOMAL_L20"/>
    <property type="match status" value="1"/>
</dbReference>
<proteinExistence type="inferred from homology"/>